<keyword id="KW-0131">Cell cycle</keyword>
<keyword id="KW-0175">Coiled coil</keyword>
<keyword id="KW-0238">DNA-binding</keyword>
<keyword id="KW-0479">Metal-binding</keyword>
<keyword id="KW-0539">Nucleus</keyword>
<keyword id="KW-1185">Reference proteome</keyword>
<keyword id="KW-0804">Transcription</keyword>
<keyword id="KW-0805">Transcription regulation</keyword>
<keyword id="KW-0862">Zinc</keyword>
<keyword id="KW-0863">Zinc-finger</keyword>
<comment type="function">
    <text evidence="1">DNA-binding transcription regulator that regulates endothelial cell proliferation and G1/S cell-cycle progression. Specifically binds the 5'-[AT]NTNN[GT]GGCA[AGT]-3' core DNA sequence and acts by modulating expression of pRB-E2F cell-cycle target genes, including RRM1. May also have pro-apoptotic activity by potentiating both serum-withdrawal and TNF-induced apoptosis (By similarity).</text>
</comment>
<comment type="subunit">
    <text evidence="1">Interacts with PAWR. Component of a THAP1/THAP3-HCFC1-OGT complex that contains, either THAP1 or THAP3, HCFC1 and OGT. Interacts with OGT. Interacts (via the HBM) with HCFC1 (via the Kelch-repeat domain); the interaction recruits HCFC1 to the RRM1 promoter (By similarity).</text>
</comment>
<comment type="subcellular location">
    <subcellularLocation>
        <location evidence="1">Nucleus</location>
        <location evidence="1">Nucleoplasm</location>
    </subcellularLocation>
    <subcellularLocation>
        <location evidence="1">Nucleus</location>
        <location evidence="1">PML body</location>
    </subcellularLocation>
</comment>
<comment type="similarity">
    <text evidence="4">Belongs to the THAP1 family.</text>
</comment>
<dbReference type="EMBL" id="BC086347">
    <property type="protein sequence ID" value="AAH86347.1"/>
    <property type="molecule type" value="mRNA"/>
</dbReference>
<dbReference type="RefSeq" id="NP_001008341.1">
    <property type="nucleotide sequence ID" value="NM_001008340.1"/>
</dbReference>
<dbReference type="SMR" id="Q5U208"/>
<dbReference type="FunCoup" id="Q5U208">
    <property type="interactions" value="2310"/>
</dbReference>
<dbReference type="STRING" id="10116.ENSRNOP00000071777"/>
<dbReference type="PhosphoSitePlus" id="Q5U208"/>
<dbReference type="PaxDb" id="10116-ENSRNOP00000019026"/>
<dbReference type="GeneID" id="306547"/>
<dbReference type="KEGG" id="rno:306547"/>
<dbReference type="AGR" id="RGD:1307589"/>
<dbReference type="CTD" id="55145"/>
<dbReference type="RGD" id="1307589">
    <property type="gene designation" value="Thap1"/>
</dbReference>
<dbReference type="VEuPathDB" id="HostDB:ENSRNOG00000056956"/>
<dbReference type="eggNOG" id="KOG1721">
    <property type="taxonomic scope" value="Eukaryota"/>
</dbReference>
<dbReference type="HOGENOM" id="CLU_076186_2_1_1"/>
<dbReference type="InParanoid" id="Q5U208"/>
<dbReference type="OrthoDB" id="9867479at2759"/>
<dbReference type="PhylomeDB" id="Q5U208"/>
<dbReference type="TreeFam" id="TF330127"/>
<dbReference type="PRO" id="PR:Q5U208"/>
<dbReference type="Proteomes" id="UP000002494">
    <property type="component" value="Chromosome 16"/>
</dbReference>
<dbReference type="Bgee" id="ENSRNOG00000056956">
    <property type="expression patterns" value="Expressed in testis and 19 other cell types or tissues"/>
</dbReference>
<dbReference type="ExpressionAtlas" id="Q5U208">
    <property type="expression patterns" value="baseline and differential"/>
</dbReference>
<dbReference type="GO" id="GO:0005634">
    <property type="term" value="C:nucleus"/>
    <property type="evidence" value="ECO:0000266"/>
    <property type="project" value="RGD"/>
</dbReference>
<dbReference type="GO" id="GO:0016605">
    <property type="term" value="C:PML body"/>
    <property type="evidence" value="ECO:0007669"/>
    <property type="project" value="UniProtKB-SubCell"/>
</dbReference>
<dbReference type="GO" id="GO:0003700">
    <property type="term" value="F:DNA-binding transcription factor activity"/>
    <property type="evidence" value="ECO:0000318"/>
    <property type="project" value="GO_Central"/>
</dbReference>
<dbReference type="GO" id="GO:0001227">
    <property type="term" value="F:DNA-binding transcription repressor activity, RNA polymerase II-specific"/>
    <property type="evidence" value="ECO:0000266"/>
    <property type="project" value="RGD"/>
</dbReference>
<dbReference type="GO" id="GO:0042802">
    <property type="term" value="F:identical protein binding"/>
    <property type="evidence" value="ECO:0000266"/>
    <property type="project" value="RGD"/>
</dbReference>
<dbReference type="GO" id="GO:0042803">
    <property type="term" value="F:protein homodimerization activity"/>
    <property type="evidence" value="ECO:0000250"/>
    <property type="project" value="UniProtKB"/>
</dbReference>
<dbReference type="GO" id="GO:0000978">
    <property type="term" value="F:RNA polymerase II cis-regulatory region sequence-specific DNA binding"/>
    <property type="evidence" value="ECO:0000266"/>
    <property type="project" value="RGD"/>
</dbReference>
<dbReference type="GO" id="GO:0043565">
    <property type="term" value="F:sequence-specific DNA binding"/>
    <property type="evidence" value="ECO:0000250"/>
    <property type="project" value="UniProtKB"/>
</dbReference>
<dbReference type="GO" id="GO:0008270">
    <property type="term" value="F:zinc ion binding"/>
    <property type="evidence" value="ECO:0000266"/>
    <property type="project" value="RGD"/>
</dbReference>
<dbReference type="GO" id="GO:0006351">
    <property type="term" value="P:DNA-templated transcription"/>
    <property type="evidence" value="ECO:0000266"/>
    <property type="project" value="RGD"/>
</dbReference>
<dbReference type="GO" id="GO:0001935">
    <property type="term" value="P:endothelial cell proliferation"/>
    <property type="evidence" value="ECO:0000266"/>
    <property type="project" value="RGD"/>
</dbReference>
<dbReference type="GO" id="GO:0000122">
    <property type="term" value="P:negative regulation of transcription by RNA polymerase II"/>
    <property type="evidence" value="ECO:0000266"/>
    <property type="project" value="RGD"/>
</dbReference>
<dbReference type="GO" id="GO:0006355">
    <property type="term" value="P:regulation of DNA-templated transcription"/>
    <property type="evidence" value="ECO:0000266"/>
    <property type="project" value="RGD"/>
</dbReference>
<dbReference type="GO" id="GO:0007346">
    <property type="term" value="P:regulation of mitotic cell cycle"/>
    <property type="evidence" value="ECO:0000266"/>
    <property type="project" value="RGD"/>
</dbReference>
<dbReference type="GO" id="GO:0006357">
    <property type="term" value="P:regulation of transcription by RNA polymerase II"/>
    <property type="evidence" value="ECO:0000318"/>
    <property type="project" value="GO_Central"/>
</dbReference>
<dbReference type="Gene3D" id="6.20.210.20">
    <property type="entry name" value="THAP domain"/>
    <property type="match status" value="1"/>
</dbReference>
<dbReference type="InterPro" id="IPR026516">
    <property type="entry name" value="THAP1/10"/>
</dbReference>
<dbReference type="InterPro" id="IPR006612">
    <property type="entry name" value="THAP_Znf"/>
</dbReference>
<dbReference type="InterPro" id="IPR038441">
    <property type="entry name" value="THAP_Znf_sf"/>
</dbReference>
<dbReference type="PANTHER" id="PTHR46600">
    <property type="entry name" value="THAP DOMAIN-CONTAINING"/>
    <property type="match status" value="1"/>
</dbReference>
<dbReference type="PANTHER" id="PTHR46600:SF1">
    <property type="entry name" value="THAP DOMAIN-CONTAINING PROTEIN 1"/>
    <property type="match status" value="1"/>
</dbReference>
<dbReference type="Pfam" id="PF05485">
    <property type="entry name" value="THAP"/>
    <property type="match status" value="1"/>
</dbReference>
<dbReference type="SMART" id="SM00692">
    <property type="entry name" value="DM3"/>
    <property type="match status" value="1"/>
</dbReference>
<dbReference type="SMART" id="SM00980">
    <property type="entry name" value="THAP"/>
    <property type="match status" value="1"/>
</dbReference>
<dbReference type="SUPFAM" id="SSF57716">
    <property type="entry name" value="Glucocorticoid receptor-like (DNA-binding domain)"/>
    <property type="match status" value="1"/>
</dbReference>
<dbReference type="PROSITE" id="PS50950">
    <property type="entry name" value="ZF_THAP"/>
    <property type="match status" value="1"/>
</dbReference>
<name>THAP1_RAT</name>
<proteinExistence type="evidence at transcript level"/>
<evidence type="ECO:0000250" key="1"/>
<evidence type="ECO:0000255" key="2"/>
<evidence type="ECO:0000255" key="3">
    <source>
        <dbReference type="PROSITE-ProRule" id="PRU00309"/>
    </source>
</evidence>
<evidence type="ECO:0000305" key="4"/>
<accession>Q5U208</accession>
<gene>
    <name type="primary">Thap1</name>
</gene>
<protein>
    <recommendedName>
        <fullName>THAP domain-containing protein 1</fullName>
    </recommendedName>
</protein>
<organism>
    <name type="scientific">Rattus norvegicus</name>
    <name type="common">Rat</name>
    <dbReference type="NCBI Taxonomy" id="10116"/>
    <lineage>
        <taxon>Eukaryota</taxon>
        <taxon>Metazoa</taxon>
        <taxon>Chordata</taxon>
        <taxon>Craniata</taxon>
        <taxon>Vertebrata</taxon>
        <taxon>Euteleostomi</taxon>
        <taxon>Mammalia</taxon>
        <taxon>Eutheria</taxon>
        <taxon>Euarchontoglires</taxon>
        <taxon>Glires</taxon>
        <taxon>Rodentia</taxon>
        <taxon>Myomorpha</taxon>
        <taxon>Muroidea</taxon>
        <taxon>Muridae</taxon>
        <taxon>Murinae</taxon>
        <taxon>Rattus</taxon>
    </lineage>
</organism>
<reference key="1">
    <citation type="journal article" date="2004" name="Genome Res.">
        <title>The status, quality, and expansion of the NIH full-length cDNA project: the Mammalian Gene Collection (MGC).</title>
        <authorList>
            <consortium name="The MGC Project Team"/>
        </authorList>
    </citation>
    <scope>NUCLEOTIDE SEQUENCE [LARGE SCALE MRNA]</scope>
    <source>
        <tissue>Ovary</tissue>
    </source>
</reference>
<sequence>MVQSCSAYGCKNRYDKDKPVSFHKFPLTRPSLCKQWEAAVRRKNFKPTKYSSICSEHFTPDCFKRECNNKLLKENAVPTIFLYIEPHEKKEELEPQEQLPSPSPPTSQVDAAVGLLMPPLQTPDNLSVFCDHNYTVEDTMHQRKRILHLEQQVEKLRKKLKTAQQRCRRQERQLEKLKEVVHFQREKDDASERGYVILPNDYFEIVEVPA</sequence>
<feature type="chain" id="PRO_0000068641" description="THAP domain-containing protein 1">
    <location>
        <begin position="1"/>
        <end position="210"/>
    </location>
</feature>
<feature type="zinc finger region" description="THAP-type" evidence="3">
    <location>
        <begin position="5"/>
        <end position="57"/>
    </location>
</feature>
<feature type="coiled-coil region" evidence="2">
    <location>
        <begin position="140"/>
        <end position="187"/>
    </location>
</feature>
<feature type="short sequence motif" description="HCFC1-binding motif (HBM)" evidence="1">
    <location>
        <begin position="131"/>
        <end position="134"/>
    </location>
</feature>